<proteinExistence type="evidence at transcript level"/>
<dbReference type="EMBL" id="BC093612">
    <property type="protein sequence ID" value="AAH93612.1"/>
    <property type="molecule type" value="mRNA"/>
</dbReference>
<dbReference type="RefSeq" id="NP_001019416.1">
    <property type="nucleotide sequence ID" value="NM_001024245.2"/>
</dbReference>
<dbReference type="SMR" id="Q561K4"/>
<dbReference type="FunCoup" id="Q561K4">
    <property type="interactions" value="1144"/>
</dbReference>
<dbReference type="STRING" id="10116.ENSRNOP00000013963"/>
<dbReference type="PhosphoSitePlus" id="Q561K4"/>
<dbReference type="PaxDb" id="10116-ENSRNOP00000013963"/>
<dbReference type="Ensembl" id="ENSRNOT00000013963.8">
    <property type="protein sequence ID" value="ENSRNOP00000013963.4"/>
    <property type="gene ID" value="ENSRNOG00000010472.8"/>
</dbReference>
<dbReference type="GeneID" id="296081"/>
<dbReference type="KEGG" id="rno:296081"/>
<dbReference type="UCSC" id="RGD:1307516">
    <property type="organism name" value="rat"/>
</dbReference>
<dbReference type="AGR" id="RGD:1307516"/>
<dbReference type="CTD" id="90416"/>
<dbReference type="RGD" id="1307516">
    <property type="gene designation" value="Ccdc32"/>
</dbReference>
<dbReference type="eggNOG" id="KOG4106">
    <property type="taxonomic scope" value="Eukaryota"/>
</dbReference>
<dbReference type="GeneTree" id="ENSGT00390000014780"/>
<dbReference type="HOGENOM" id="CLU_119111_0_0_1"/>
<dbReference type="InParanoid" id="Q561K4"/>
<dbReference type="OMA" id="YVEGHES"/>
<dbReference type="OrthoDB" id="5982503at2759"/>
<dbReference type="PhylomeDB" id="Q561K4"/>
<dbReference type="TreeFam" id="TF332102"/>
<dbReference type="PRO" id="PR:Q561K4"/>
<dbReference type="Proteomes" id="UP000002494">
    <property type="component" value="Chromosome 3"/>
</dbReference>
<dbReference type="Bgee" id="ENSRNOG00000010472">
    <property type="expression patterns" value="Expressed in frontal cortex and 19 other cell types or tissues"/>
</dbReference>
<dbReference type="GO" id="GO:0005905">
    <property type="term" value="C:clathrin-coated pit"/>
    <property type="evidence" value="ECO:0000250"/>
    <property type="project" value="UniProtKB"/>
</dbReference>
<dbReference type="GO" id="GO:0044782">
    <property type="term" value="P:cilium organization"/>
    <property type="evidence" value="ECO:0000250"/>
    <property type="project" value="UniProtKB"/>
</dbReference>
<dbReference type="GO" id="GO:0060322">
    <property type="term" value="P:head development"/>
    <property type="evidence" value="ECO:0000266"/>
    <property type="project" value="RGD"/>
</dbReference>
<dbReference type="GO" id="GO:2000369">
    <property type="term" value="P:regulation of clathrin-dependent endocytosis"/>
    <property type="evidence" value="ECO:0000250"/>
    <property type="project" value="UniProtKB"/>
</dbReference>
<dbReference type="InterPro" id="IPR028039">
    <property type="entry name" value="CCDC32"/>
</dbReference>
<dbReference type="PANTHER" id="PTHR31800">
    <property type="entry name" value="COILED-COIL DOMAIN-CONTAINING PROTEIN 32"/>
    <property type="match status" value="1"/>
</dbReference>
<dbReference type="PANTHER" id="PTHR31800:SF1">
    <property type="entry name" value="COILED-COIL DOMAIN-CONTAINING PROTEIN 32"/>
    <property type="match status" value="1"/>
</dbReference>
<dbReference type="Pfam" id="PF14989">
    <property type="entry name" value="CCDC32"/>
    <property type="match status" value="1"/>
</dbReference>
<feature type="chain" id="PRO_0000298939" description="Coiled-coil domain-containing protein 32">
    <location>
        <begin position="1"/>
        <end position="179"/>
    </location>
</feature>
<feature type="region of interest" description="Disordered" evidence="4">
    <location>
        <begin position="157"/>
        <end position="179"/>
    </location>
</feature>
<feature type="coiled-coil region" evidence="3">
    <location>
        <begin position="75"/>
        <end position="98"/>
    </location>
</feature>
<feature type="compositionally biased region" description="Basic and acidic residues" evidence="4">
    <location>
        <begin position="164"/>
        <end position="179"/>
    </location>
</feature>
<organism>
    <name type="scientific">Rattus norvegicus</name>
    <name type="common">Rat</name>
    <dbReference type="NCBI Taxonomy" id="10116"/>
    <lineage>
        <taxon>Eukaryota</taxon>
        <taxon>Metazoa</taxon>
        <taxon>Chordata</taxon>
        <taxon>Craniata</taxon>
        <taxon>Vertebrata</taxon>
        <taxon>Euteleostomi</taxon>
        <taxon>Mammalia</taxon>
        <taxon>Eutheria</taxon>
        <taxon>Euarchontoglires</taxon>
        <taxon>Glires</taxon>
        <taxon>Rodentia</taxon>
        <taxon>Myomorpha</taxon>
        <taxon>Muroidea</taxon>
        <taxon>Muridae</taxon>
        <taxon>Murinae</taxon>
        <taxon>Rattus</taxon>
    </lineage>
</organism>
<protein>
    <recommendedName>
        <fullName>Coiled-coil domain-containing protein 32</fullName>
    </recommendedName>
</protein>
<comment type="function">
    <text evidence="1 2">Regulates clathrin-mediated endocytsois of cargos such as transferrin probably through the association and modulation of adaptor protein complex 2 (AP-2) (By similarity). Has a role in ciliogenesis (By similarity). Required for proper cephalic and left/right axis development (By similarity).</text>
</comment>
<comment type="subunit">
    <text evidence="1">Interacts with AP2S1; the interaction is direct and mediates association with adaptor protein complex 2 (AP-2).</text>
</comment>
<comment type="subcellular location">
    <subcellularLocation>
        <location evidence="1">Membrane</location>
        <location evidence="1">Coated pit</location>
        <topology evidence="1">Peripheral membrane protein</topology>
        <orientation evidence="1">Cytoplasmic side</orientation>
    </subcellularLocation>
</comment>
<sequence length="179" mass="20018">MKMFESLDSSATKSGRDLWAEICSCLPNPAQEDVSNNAFSDSFMDSHPAGEGSMAAADSAVQPALKPWAPLHDSEVYLASLEKKLRRIKGLNEEVTSKDMLRTLAQAKKECWDRFLQEKLASEFFVDGLDSDESTLEHFKRWLQPDKVAINTEEVQFLIPPESQAEKPEARDEPAAAEQ</sequence>
<gene>
    <name type="primary">Ccdc32</name>
</gene>
<name>CCD32_RAT</name>
<keyword id="KW-0970">Cilium biogenesis/degradation</keyword>
<keyword id="KW-0168">Coated pit</keyword>
<keyword id="KW-0175">Coiled coil</keyword>
<keyword id="KW-0472">Membrane</keyword>
<keyword id="KW-1185">Reference proteome</keyword>
<evidence type="ECO:0000250" key="1">
    <source>
        <dbReference type="UniProtKB" id="Q9BV29"/>
    </source>
</evidence>
<evidence type="ECO:0000250" key="2">
    <source>
        <dbReference type="UniProtKB" id="X1WGV5"/>
    </source>
</evidence>
<evidence type="ECO:0000255" key="3"/>
<evidence type="ECO:0000256" key="4">
    <source>
        <dbReference type="SAM" id="MobiDB-lite"/>
    </source>
</evidence>
<accession>Q561K4</accession>
<reference key="1">
    <citation type="journal article" date="2004" name="Genome Res.">
        <title>The status, quality, and expansion of the NIH full-length cDNA project: the Mammalian Gene Collection (MGC).</title>
        <authorList>
            <consortium name="The MGC Project Team"/>
        </authorList>
    </citation>
    <scope>NUCLEOTIDE SEQUENCE [LARGE SCALE MRNA]</scope>
    <source>
        <tissue>Ovary</tissue>
    </source>
</reference>